<name>TOF1_EREGS</name>
<proteinExistence type="inferred from homology"/>
<dbReference type="EMBL" id="AE016819">
    <property type="protein sequence ID" value="AAS54044.2"/>
    <property type="molecule type" value="Genomic_DNA"/>
</dbReference>
<dbReference type="RefSeq" id="NP_986220.2">
    <property type="nucleotide sequence ID" value="NM_212356.2"/>
</dbReference>
<dbReference type="SMR" id="Q752A3"/>
<dbReference type="FunCoup" id="Q752A3">
    <property type="interactions" value="72"/>
</dbReference>
<dbReference type="STRING" id="284811.Q752A3"/>
<dbReference type="EnsemblFungi" id="AAS54044">
    <property type="protein sequence ID" value="AAS54044"/>
    <property type="gene ID" value="AGOS_AFR672C"/>
</dbReference>
<dbReference type="GeneID" id="4622509"/>
<dbReference type="KEGG" id="ago:AGOS_AFR672C"/>
<dbReference type="eggNOG" id="KOG1974">
    <property type="taxonomic scope" value="Eukaryota"/>
</dbReference>
<dbReference type="HOGENOM" id="CLU_008440_0_0_1"/>
<dbReference type="InParanoid" id="Q752A3"/>
<dbReference type="OMA" id="VNHHRHT"/>
<dbReference type="OrthoDB" id="310853at2759"/>
<dbReference type="Proteomes" id="UP000000591">
    <property type="component" value="Chromosome VI"/>
</dbReference>
<dbReference type="GO" id="GO:0005829">
    <property type="term" value="C:cytosol"/>
    <property type="evidence" value="ECO:0007669"/>
    <property type="project" value="EnsemblFungi"/>
</dbReference>
<dbReference type="GO" id="GO:0031298">
    <property type="term" value="C:replication fork protection complex"/>
    <property type="evidence" value="ECO:0000318"/>
    <property type="project" value="GO_Central"/>
</dbReference>
<dbReference type="GO" id="GO:0003677">
    <property type="term" value="F:DNA binding"/>
    <property type="evidence" value="ECO:0000318"/>
    <property type="project" value="GO_Central"/>
</dbReference>
<dbReference type="GO" id="GO:0006281">
    <property type="term" value="P:DNA repair"/>
    <property type="evidence" value="ECO:0000318"/>
    <property type="project" value="GO_Central"/>
</dbReference>
<dbReference type="GO" id="GO:0000076">
    <property type="term" value="P:DNA replication checkpoint signaling"/>
    <property type="evidence" value="ECO:0000318"/>
    <property type="project" value="GO_Central"/>
</dbReference>
<dbReference type="GO" id="GO:0043570">
    <property type="term" value="P:maintenance of DNA repeat elements"/>
    <property type="evidence" value="ECO:0007669"/>
    <property type="project" value="EnsemblFungi"/>
</dbReference>
<dbReference type="GO" id="GO:0051321">
    <property type="term" value="P:meiotic cell cycle"/>
    <property type="evidence" value="ECO:0007669"/>
    <property type="project" value="UniProtKB-KW"/>
</dbReference>
<dbReference type="GO" id="GO:0007064">
    <property type="term" value="P:mitotic sister chromatid cohesion"/>
    <property type="evidence" value="ECO:0007669"/>
    <property type="project" value="EnsemblFungi"/>
</dbReference>
<dbReference type="GO" id="GO:0043111">
    <property type="term" value="P:replication fork arrest"/>
    <property type="evidence" value="ECO:0000318"/>
    <property type="project" value="GO_Central"/>
</dbReference>
<dbReference type="GO" id="GO:0031297">
    <property type="term" value="P:replication fork processing"/>
    <property type="evidence" value="ECO:0007669"/>
    <property type="project" value="EnsemblFungi"/>
</dbReference>
<dbReference type="InterPro" id="IPR044998">
    <property type="entry name" value="Timeless"/>
</dbReference>
<dbReference type="InterPro" id="IPR006906">
    <property type="entry name" value="Timeless_N"/>
</dbReference>
<dbReference type="PANTHER" id="PTHR22940:SF4">
    <property type="entry name" value="PROTEIN TIMELESS HOMOLOG"/>
    <property type="match status" value="1"/>
</dbReference>
<dbReference type="PANTHER" id="PTHR22940">
    <property type="entry name" value="TIMEOUT/TIMELESS-2"/>
    <property type="match status" value="1"/>
</dbReference>
<dbReference type="Pfam" id="PF04821">
    <property type="entry name" value="TIMELESS"/>
    <property type="match status" value="1"/>
</dbReference>
<feature type="chain" id="PRO_0000301727" description="Topoisomerase 1-associated factor 1">
    <location>
        <begin position="1"/>
        <end position="1265"/>
    </location>
</feature>
<feature type="region of interest" description="Disordered" evidence="2">
    <location>
        <begin position="650"/>
        <end position="670"/>
    </location>
</feature>
<feature type="region of interest" description="Disordered" evidence="2">
    <location>
        <begin position="1019"/>
        <end position="1052"/>
    </location>
</feature>
<feature type="region of interest" description="Disordered" evidence="2">
    <location>
        <begin position="1167"/>
        <end position="1226"/>
    </location>
</feature>
<feature type="compositionally biased region" description="Polar residues" evidence="2">
    <location>
        <begin position="650"/>
        <end position="659"/>
    </location>
</feature>
<feature type="compositionally biased region" description="Basic residues" evidence="2">
    <location>
        <begin position="1026"/>
        <end position="1039"/>
    </location>
</feature>
<feature type="compositionally biased region" description="Low complexity" evidence="2">
    <location>
        <begin position="1171"/>
        <end position="1188"/>
    </location>
</feature>
<feature type="compositionally biased region" description="Low complexity" evidence="2">
    <location>
        <begin position="1201"/>
        <end position="1211"/>
    </location>
</feature>
<gene>
    <name type="primary">TOF1</name>
    <name type="ordered locus">AFR672C</name>
</gene>
<reference key="1">
    <citation type="journal article" date="2004" name="Science">
        <title>The Ashbya gossypii genome as a tool for mapping the ancient Saccharomyces cerevisiae genome.</title>
        <authorList>
            <person name="Dietrich F.S."/>
            <person name="Voegeli S."/>
            <person name="Brachat S."/>
            <person name="Lerch A."/>
            <person name="Gates K."/>
            <person name="Steiner S."/>
            <person name="Mohr C."/>
            <person name="Poehlmann R."/>
            <person name="Luedi P."/>
            <person name="Choi S."/>
            <person name="Wing R.A."/>
            <person name="Flavier A."/>
            <person name="Gaffney T.D."/>
            <person name="Philippsen P."/>
        </authorList>
    </citation>
    <scope>NUCLEOTIDE SEQUENCE [LARGE SCALE GENOMIC DNA]</scope>
    <source>
        <strain>ATCC 10895 / CBS 109.51 / FGSC 9923 / NRRL Y-1056</strain>
    </source>
</reference>
<reference key="2">
    <citation type="journal article" date="2013" name="G3 (Bethesda)">
        <title>Genomes of Ashbya fungi isolated from insects reveal four mating-type loci, numerous translocations, lack of transposons, and distinct gene duplications.</title>
        <authorList>
            <person name="Dietrich F.S."/>
            <person name="Voegeli S."/>
            <person name="Kuo S."/>
            <person name="Philippsen P."/>
        </authorList>
    </citation>
    <scope>GENOME REANNOTATION</scope>
    <scope>SEQUENCE REVISION TO 408 AND 410</scope>
    <source>
        <strain>ATCC 10895 / CBS 109.51 / FGSC 9923 / NRRL Y-1056</strain>
    </source>
</reference>
<keyword id="KW-0131">Cell cycle</keyword>
<keyword id="KW-0227">DNA damage</keyword>
<keyword id="KW-0234">DNA repair</keyword>
<keyword id="KW-0236">DNA replication inhibitor</keyword>
<keyword id="KW-0469">Meiosis</keyword>
<keyword id="KW-0539">Nucleus</keyword>
<keyword id="KW-1185">Reference proteome</keyword>
<evidence type="ECO:0000250" key="1"/>
<evidence type="ECO:0000256" key="2">
    <source>
        <dbReference type="SAM" id="MobiDB-lite"/>
    </source>
</evidence>
<evidence type="ECO:0000305" key="3"/>
<protein>
    <recommendedName>
        <fullName>Topoisomerase 1-associated factor 1</fullName>
    </recommendedName>
</protein>
<accession>Q752A3</accession>
<sequence length="1265" mass="144220">MEEMVSQNTEGDKSIDDHWQTEGAETQPGLHETFPLGVLKARVALLATAIGGPDHTSEQEAAPYKLGDDCLACLKDLKRWFVLVDQKQKRWDVASAAAEFRILEEDLIPILVQWEQKMSQGIKQSKVSGLPLSECIKNKQYHGKIALNAFQLMVWMTWPMTLNEESSKNQVHHYSGLKKHQLAYKKAILQAHGGKVVKAAVRIATEVIKIDRLDRSVQDNSLIRLVLNFLRNILAIEPGEVTVSAKQLSKSRNINTSDMLPPNISVDDICLNSVVSVFKKFKVFPFLLTISSSMGHEFEAEYVCLPLLEVAFYLTKDIDPHLLSLKADNPPQSLQNCGNKVSNGQGVVSGQLGMELIHLLDKERHHKMSQIRSSSTRHSRFGGFFSIQTPNNGRLTISNGHSALDHDLALNNIDKKKKWNKTTRNTAEAVQGIPVGVLNGEFNLTFLSHDNRSCLKWFLANFVDSSFNILLKNLIDYFTADEFNQQILQKLQFLLFYAWFLKFERDRCQKGETDGIFVSEALQDTSHILIIKFLREAHELKKWPLVHAAMLAITELLNYLDVLGEDWEEDVVGIYTKIFSNERLKLFSTIPRTASRHSLHYVKACINMNHAIMTTLERFNKNNKDLIIKGFRKRMITRFIVKEGKTTSGDVNGNKNGQDTTRDADEDAISSDEETNMISARLDFKKVLDAYFNGTVIDTYIFYLKHFTELTEEDIKRVLYFLNHILCSNEESFLFRVDFMIVLKEMLAPGGLSVTGHTRIRINEFSDHFMAKLKRKLEKSPFWYINILFPNLHDRELGYYLRYGQQRPNTQSIHKVVAPTMFKHIEGEENMSEQQLKDLKIGVLVSTLLDDGKNHFVEEINRIFKLVVEGYEKHYQNNERSATLHYPRVDFRSDMFDMKRALLFDSDLRALMTTLGYHVADTEVEPCYIGGIFYFPDLSSALNSLEQYMAIPFHTPNGLPSSSYLLRSIDYKSGVDADAKVGEAMRIDQFSDEMADMALSENANRYFEDLNRMEERLEGKQIPRGTAKKRSAIKPKSRKSQPTGIGGIDDDTPVINKSKRKKQLFLSNEFIMDSDDEEELVASPIFYENEIYLRFILNKYQGNLPSHLFSVFSRFANERGRMAGAVVGDYTDLFNGPVPSIEELKSMENSTTHHGLKEILQLQPRDHLSLSPNNENNSAHSSENLSSDSENDNITNDIPLSDSEYNSSNSSQYANTAKTSIIDPPSSKTSLLKLALTHEADVESEDDFIPRKRARKVRLEDGEEY</sequence>
<organism>
    <name type="scientific">Eremothecium gossypii (strain ATCC 10895 / CBS 109.51 / FGSC 9923 / NRRL Y-1056)</name>
    <name type="common">Yeast</name>
    <name type="synonym">Ashbya gossypii</name>
    <dbReference type="NCBI Taxonomy" id="284811"/>
    <lineage>
        <taxon>Eukaryota</taxon>
        <taxon>Fungi</taxon>
        <taxon>Dikarya</taxon>
        <taxon>Ascomycota</taxon>
        <taxon>Saccharomycotina</taxon>
        <taxon>Saccharomycetes</taxon>
        <taxon>Saccharomycetales</taxon>
        <taxon>Saccharomycetaceae</taxon>
        <taxon>Eremothecium</taxon>
    </lineage>
</organism>
<comment type="function">
    <text evidence="1">Forms a fork protection complex (FPC) with CSM3 and which is required for chromosome segregation during meiosis and DNA damage repair. FPC coordinates leading and lagging strand synthesis and moves with the replication fork. FPC stabilizes replication forks in a configuration that is recognized by replication checkpoint sensors (By similarity).</text>
</comment>
<comment type="subunit">
    <text evidence="1">Component of the fork protection complex (FPC) consisting of TOF1 and CSM3.</text>
</comment>
<comment type="subcellular location">
    <subcellularLocation>
        <location evidence="1">Nucleus</location>
    </subcellularLocation>
</comment>
<comment type="similarity">
    <text evidence="3">Belongs to the timeless family.</text>
</comment>